<feature type="chain" id="PRO_0000457296" description="Probable N-acetyltransferase Rv2775">
    <location>
        <begin position="1"/>
        <end position="174"/>
    </location>
</feature>
<feature type="domain" description="N-acetyltransferase" evidence="1">
    <location>
        <begin position="6"/>
        <end position="172"/>
    </location>
</feature>
<name>Y2775_MYCTU</name>
<reference evidence="4" key="1">
    <citation type="journal article" date="1998" name="Nature">
        <title>Deciphering the biology of Mycobacterium tuberculosis from the complete genome sequence.</title>
        <authorList>
            <person name="Cole S.T."/>
            <person name="Brosch R."/>
            <person name="Parkhill J."/>
            <person name="Garnier T."/>
            <person name="Churcher C.M."/>
            <person name="Harris D.E."/>
            <person name="Gordon S.V."/>
            <person name="Eiglmeier K."/>
            <person name="Gas S."/>
            <person name="Barry C.E. III"/>
            <person name="Tekaia F."/>
            <person name="Badcock K."/>
            <person name="Basham D."/>
            <person name="Brown D."/>
            <person name="Chillingworth T."/>
            <person name="Connor R."/>
            <person name="Davies R.M."/>
            <person name="Devlin K."/>
            <person name="Feltwell T."/>
            <person name="Gentles S."/>
            <person name="Hamlin N."/>
            <person name="Holroyd S."/>
            <person name="Hornsby T."/>
            <person name="Jagels K."/>
            <person name="Krogh A."/>
            <person name="McLean J."/>
            <person name="Moule S."/>
            <person name="Murphy L.D."/>
            <person name="Oliver S."/>
            <person name="Osborne J."/>
            <person name="Quail M.A."/>
            <person name="Rajandream M.A."/>
            <person name="Rogers J."/>
            <person name="Rutter S."/>
            <person name="Seeger K."/>
            <person name="Skelton S."/>
            <person name="Squares S."/>
            <person name="Squares R."/>
            <person name="Sulston J.E."/>
            <person name="Taylor K."/>
            <person name="Whitehead S."/>
            <person name="Barrell B.G."/>
        </authorList>
    </citation>
    <scope>NUCLEOTIDE SEQUENCE [LARGE SCALE GENOMIC DNA]</scope>
    <source>
        <strain>ATCC 25618 / H37Rv</strain>
    </source>
</reference>
<reference key="2">
    <citation type="journal article" date="2022" name="Genomics">
        <title>Deep N-terminomics of Mycobacterium tuberculosis H37Rv extensively correct annotated encoding genes.</title>
        <authorList>
            <person name="Shi J."/>
            <person name="Meng S."/>
            <person name="Wan L."/>
            <person name="Zhang Z."/>
            <person name="Jiang S."/>
            <person name="Zhu H."/>
            <person name="Dai E."/>
            <person name="Chang L."/>
            <person name="Gao H."/>
            <person name="Wan K."/>
            <person name="Zhang L."/>
            <person name="Zhao X."/>
            <person name="Liu H."/>
            <person name="Lyu Z."/>
            <person name="Zhang Y."/>
            <person name="Xu P."/>
        </authorList>
    </citation>
    <scope>PROTEIN SEQUENCE OF 19-28</scope>
    <scope>SEQUENCE REVISION TO N-TERMINUS</scope>
    <source>
        <strain>H37Rv</strain>
    </source>
</reference>
<keyword id="KW-0012">Acyltransferase</keyword>
<keyword id="KW-0903">Direct protein sequencing</keyword>
<keyword id="KW-1185">Reference proteome</keyword>
<keyword id="KW-0808">Transferase</keyword>
<organism>
    <name type="scientific">Mycobacterium tuberculosis (strain ATCC 25618 / H37Rv)</name>
    <dbReference type="NCBI Taxonomy" id="83332"/>
    <lineage>
        <taxon>Bacteria</taxon>
        <taxon>Bacillati</taxon>
        <taxon>Actinomycetota</taxon>
        <taxon>Actinomycetes</taxon>
        <taxon>Mycobacteriales</taxon>
        <taxon>Mycobacteriaceae</taxon>
        <taxon>Mycobacterium</taxon>
        <taxon>Mycobacterium tuberculosis complex</taxon>
    </lineage>
</organism>
<proteinExistence type="evidence at protein level"/>
<sequence length="174" mass="19712">MKPSNIRIRAAKPIDFPKVAAMHYPVWRQSWTGILDPYLLDMIGSPKLWVEESYPQSLKRGGWSMWIAESGGQPIGMTMFGPDIAHPDRIQIDALYVAENSQRHGIGGRLLNRALHSHPSADMILWCAEKNSKARGFYEKKDFHIDGRTFTWKPLSGVNVPHVGYRLYRSAPPG</sequence>
<accession>O33317</accession>
<accession>I6YEC4</accession>
<dbReference type="EC" id="2.3.1.-" evidence="1"/>
<dbReference type="EMBL" id="AL123456">
    <property type="protein sequence ID" value="CCP45574.1"/>
    <property type="status" value="ALT_INIT"/>
    <property type="molecule type" value="Genomic_DNA"/>
</dbReference>
<dbReference type="RefSeq" id="NP_217291.3">
    <property type="nucleotide sequence ID" value="NC_000962.3"/>
</dbReference>
<dbReference type="RefSeq" id="WP_003414102.1">
    <property type="nucleotide sequence ID" value="NC_000962.3"/>
</dbReference>
<dbReference type="SMR" id="O33317"/>
<dbReference type="STRING" id="83332.Rv2775"/>
<dbReference type="PaxDb" id="83332-Rv2775"/>
<dbReference type="GeneID" id="888432"/>
<dbReference type="KEGG" id="mtu:Rv2775"/>
<dbReference type="PATRIC" id="fig|83332.111.peg.3088"/>
<dbReference type="TubercuList" id="Rv2775"/>
<dbReference type="eggNOG" id="COG0456">
    <property type="taxonomic scope" value="Bacteria"/>
</dbReference>
<dbReference type="InParanoid" id="O33317"/>
<dbReference type="OrthoDB" id="5243635at2"/>
<dbReference type="PhylomeDB" id="O33317"/>
<dbReference type="Proteomes" id="UP000001584">
    <property type="component" value="Chromosome"/>
</dbReference>
<dbReference type="GO" id="GO:0016747">
    <property type="term" value="F:acyltransferase activity, transferring groups other than amino-acyl groups"/>
    <property type="evidence" value="ECO:0007669"/>
    <property type="project" value="InterPro"/>
</dbReference>
<dbReference type="CDD" id="cd04301">
    <property type="entry name" value="NAT_SF"/>
    <property type="match status" value="1"/>
</dbReference>
<dbReference type="FunFam" id="3.40.630.30:FF:000207">
    <property type="entry name" value="GCN5-related N-acetyltransferase"/>
    <property type="match status" value="1"/>
</dbReference>
<dbReference type="Gene3D" id="3.40.630.30">
    <property type="match status" value="1"/>
</dbReference>
<dbReference type="InterPro" id="IPR016181">
    <property type="entry name" value="Acyl_CoA_acyltransferase"/>
</dbReference>
<dbReference type="InterPro" id="IPR050832">
    <property type="entry name" value="Bact_Acetyltransf"/>
</dbReference>
<dbReference type="InterPro" id="IPR000182">
    <property type="entry name" value="GNAT_dom"/>
</dbReference>
<dbReference type="PANTHER" id="PTHR43877">
    <property type="entry name" value="AMINOALKYLPHOSPHONATE N-ACETYLTRANSFERASE-RELATED-RELATED"/>
    <property type="match status" value="1"/>
</dbReference>
<dbReference type="Pfam" id="PF00583">
    <property type="entry name" value="Acetyltransf_1"/>
    <property type="match status" value="1"/>
</dbReference>
<dbReference type="SUPFAM" id="SSF55729">
    <property type="entry name" value="Acyl-CoA N-acyltransferases (Nat)"/>
    <property type="match status" value="1"/>
</dbReference>
<dbReference type="PROSITE" id="PS51186">
    <property type="entry name" value="GNAT"/>
    <property type="match status" value="1"/>
</dbReference>
<protein>
    <recommendedName>
        <fullName evidence="3">Probable N-acetyltransferase Rv2775</fullName>
        <ecNumber evidence="1">2.3.1.-</ecNumber>
    </recommendedName>
</protein>
<evidence type="ECO:0000255" key="1">
    <source>
        <dbReference type="PROSITE-ProRule" id="PRU00532"/>
    </source>
</evidence>
<evidence type="ECO:0000269" key="2">
    <source>
    </source>
</evidence>
<evidence type="ECO:0000305" key="3"/>
<evidence type="ECO:0000312" key="4">
    <source>
        <dbReference type="EMBL" id="CCP45574.1"/>
    </source>
</evidence>
<comment type="similarity">
    <text evidence="3">Belongs to the acetyltransferase family.</text>
</comment>
<comment type="sequence caution" evidence="2">
    <conflict type="erroneous initiation">
        <sequence resource="EMBL-CDS" id="CCP45574"/>
    </conflict>
    <text>Truncated N-terminus.</text>
</comment>
<gene>
    <name evidence="4" type="ordered locus">Rv2775</name>
</gene>